<proteinExistence type="inferred from homology"/>
<protein>
    <recommendedName>
        <fullName evidence="1">N-succinylglutamate 5-semialdehyde dehydrogenase</fullName>
        <ecNumber evidence="1">1.2.1.71</ecNumber>
    </recommendedName>
    <alternativeName>
        <fullName evidence="1">Succinylglutamic semialdehyde dehydrogenase</fullName>
        <shortName evidence="1">SGSD</shortName>
    </alternativeName>
</protein>
<sequence length="492" mass="52916">MTLWINGDWVTGQGALRVKRNPVSGEVLWQGNDADAAQVGQACRAARAAFPRWARLSFGDRQVRVERFAGLLESNKAELTAIIARETGKPRWEAATEVTAMINKIAISIKAYHIRTGEQRSEMPDGAASLRHRPHGVLAVFGPYNFPGHLPNGHIVPALLAGNTIIFKPSELTPWSGEAVMRLWQQAGLPPGVLNLVQGGRETGQALSALEDLDGLLFTGSANTGYQLHRQLSGQPEKILALEMGGNNPLIIDEVADIDAAVHLTIQSAFVTAGQRCTCARRLLLKSGAQGDAFLARLVAVSQRLTPGKWDDEPQPFIGGLISDQAAQQVVTAWQQLEAMGGRPLLAPCLLQAGTSLLTPGIIEMTGVAGVPDEEVFGPLLRVWRYDNFDEAIRMANNTRFGLSCGLVSPAREKFDQLLLEARAGIVNWNKPLTGAASTAPFGGIGASGNHRPSAWYAADYCAWPMASLESDSLTLPATLNPGLDFSDEVVR</sequence>
<reference key="1">
    <citation type="journal article" date="2009" name="PLoS Genet.">
        <title>Organised genome dynamics in the Escherichia coli species results in highly diverse adaptive paths.</title>
        <authorList>
            <person name="Touchon M."/>
            <person name="Hoede C."/>
            <person name="Tenaillon O."/>
            <person name="Barbe V."/>
            <person name="Baeriswyl S."/>
            <person name="Bidet P."/>
            <person name="Bingen E."/>
            <person name="Bonacorsi S."/>
            <person name="Bouchier C."/>
            <person name="Bouvet O."/>
            <person name="Calteau A."/>
            <person name="Chiapello H."/>
            <person name="Clermont O."/>
            <person name="Cruveiller S."/>
            <person name="Danchin A."/>
            <person name="Diard M."/>
            <person name="Dossat C."/>
            <person name="Karoui M.E."/>
            <person name="Frapy E."/>
            <person name="Garry L."/>
            <person name="Ghigo J.M."/>
            <person name="Gilles A.M."/>
            <person name="Johnson J."/>
            <person name="Le Bouguenec C."/>
            <person name="Lescat M."/>
            <person name="Mangenot S."/>
            <person name="Martinez-Jehanne V."/>
            <person name="Matic I."/>
            <person name="Nassif X."/>
            <person name="Oztas S."/>
            <person name="Petit M.A."/>
            <person name="Pichon C."/>
            <person name="Rouy Z."/>
            <person name="Ruf C.S."/>
            <person name="Schneider D."/>
            <person name="Tourret J."/>
            <person name="Vacherie B."/>
            <person name="Vallenet D."/>
            <person name="Medigue C."/>
            <person name="Rocha E.P.C."/>
            <person name="Denamur E."/>
        </authorList>
    </citation>
    <scope>NUCLEOTIDE SEQUENCE [LARGE SCALE GENOMIC DNA]</scope>
    <source>
        <strain>UMN026 / ExPEC</strain>
    </source>
</reference>
<feature type="chain" id="PRO_1000138046" description="N-succinylglutamate 5-semialdehyde dehydrogenase">
    <location>
        <begin position="1"/>
        <end position="492"/>
    </location>
</feature>
<feature type="active site" evidence="1">
    <location>
        <position position="243"/>
    </location>
</feature>
<feature type="active site" evidence="1">
    <location>
        <position position="277"/>
    </location>
</feature>
<feature type="binding site" evidence="1">
    <location>
        <begin position="220"/>
        <end position="225"/>
    </location>
    <ligand>
        <name>NAD(+)</name>
        <dbReference type="ChEBI" id="CHEBI:57540"/>
    </ligand>
</feature>
<evidence type="ECO:0000255" key="1">
    <source>
        <dbReference type="HAMAP-Rule" id="MF_01174"/>
    </source>
</evidence>
<dbReference type="EC" id="1.2.1.71" evidence="1"/>
<dbReference type="EMBL" id="CU928163">
    <property type="protein sequence ID" value="CAR13231.1"/>
    <property type="molecule type" value="Genomic_DNA"/>
</dbReference>
<dbReference type="RefSeq" id="WP_000177316.1">
    <property type="nucleotide sequence ID" value="NC_011751.1"/>
</dbReference>
<dbReference type="RefSeq" id="YP_002412763.1">
    <property type="nucleotide sequence ID" value="NC_011751.1"/>
</dbReference>
<dbReference type="SMR" id="B7N582"/>
<dbReference type="STRING" id="585056.ECUMN_2035"/>
<dbReference type="KEGG" id="eum:ECUMN_2035"/>
<dbReference type="PATRIC" id="fig|585056.7.peg.2221"/>
<dbReference type="HOGENOM" id="CLU_005391_1_0_6"/>
<dbReference type="UniPathway" id="UPA00185">
    <property type="reaction ID" value="UER00282"/>
</dbReference>
<dbReference type="Proteomes" id="UP000007097">
    <property type="component" value="Chromosome"/>
</dbReference>
<dbReference type="GO" id="GO:0004030">
    <property type="term" value="F:aldehyde dehydrogenase [NAD(P)+] activity"/>
    <property type="evidence" value="ECO:0007669"/>
    <property type="project" value="UniProtKB-ARBA"/>
</dbReference>
<dbReference type="GO" id="GO:0043824">
    <property type="term" value="F:succinylglutamate-semialdehyde dehydrogenase activity"/>
    <property type="evidence" value="ECO:0007669"/>
    <property type="project" value="UniProtKB-EC"/>
</dbReference>
<dbReference type="GO" id="GO:0019544">
    <property type="term" value="P:arginine catabolic process to glutamate"/>
    <property type="evidence" value="ECO:0007669"/>
    <property type="project" value="UniProtKB-UniRule"/>
</dbReference>
<dbReference type="GO" id="GO:0019545">
    <property type="term" value="P:arginine catabolic process to succinate"/>
    <property type="evidence" value="ECO:0007669"/>
    <property type="project" value="UniProtKB-UniRule"/>
</dbReference>
<dbReference type="CDD" id="cd07095">
    <property type="entry name" value="ALDH_SGSD_AstD"/>
    <property type="match status" value="1"/>
</dbReference>
<dbReference type="FunFam" id="3.40.309.10:FF:000013">
    <property type="entry name" value="N-succinylglutamate 5-semialdehyde dehydrogenase"/>
    <property type="match status" value="1"/>
</dbReference>
<dbReference type="FunFam" id="3.40.605.10:FF:000010">
    <property type="entry name" value="N-succinylglutamate 5-semialdehyde dehydrogenase"/>
    <property type="match status" value="1"/>
</dbReference>
<dbReference type="Gene3D" id="3.40.605.10">
    <property type="entry name" value="Aldehyde Dehydrogenase, Chain A, domain 1"/>
    <property type="match status" value="1"/>
</dbReference>
<dbReference type="Gene3D" id="3.40.309.10">
    <property type="entry name" value="Aldehyde Dehydrogenase, Chain A, domain 2"/>
    <property type="match status" value="1"/>
</dbReference>
<dbReference type="HAMAP" id="MF_01174">
    <property type="entry name" value="Aldedh_AstD"/>
    <property type="match status" value="1"/>
</dbReference>
<dbReference type="InterPro" id="IPR016161">
    <property type="entry name" value="Ald_DH/histidinol_DH"/>
</dbReference>
<dbReference type="InterPro" id="IPR016163">
    <property type="entry name" value="Ald_DH_C"/>
</dbReference>
<dbReference type="InterPro" id="IPR016160">
    <property type="entry name" value="Ald_DH_CS_CYS"/>
</dbReference>
<dbReference type="InterPro" id="IPR029510">
    <property type="entry name" value="Ald_DH_CS_GLU"/>
</dbReference>
<dbReference type="InterPro" id="IPR016162">
    <property type="entry name" value="Ald_DH_N"/>
</dbReference>
<dbReference type="InterPro" id="IPR015590">
    <property type="entry name" value="Aldehyde_DH_dom"/>
</dbReference>
<dbReference type="InterPro" id="IPR017649">
    <property type="entry name" value="SuccinylGlu_semiald_DH_AstD"/>
</dbReference>
<dbReference type="NCBIfam" id="TIGR03240">
    <property type="entry name" value="arg_catab_astD"/>
    <property type="match status" value="1"/>
</dbReference>
<dbReference type="NCBIfam" id="NF006992">
    <property type="entry name" value="PRK09457.1"/>
    <property type="match status" value="1"/>
</dbReference>
<dbReference type="PANTHER" id="PTHR11699">
    <property type="entry name" value="ALDEHYDE DEHYDROGENASE-RELATED"/>
    <property type="match status" value="1"/>
</dbReference>
<dbReference type="Pfam" id="PF00171">
    <property type="entry name" value="Aldedh"/>
    <property type="match status" value="1"/>
</dbReference>
<dbReference type="SUPFAM" id="SSF53720">
    <property type="entry name" value="ALDH-like"/>
    <property type="match status" value="1"/>
</dbReference>
<dbReference type="PROSITE" id="PS00070">
    <property type="entry name" value="ALDEHYDE_DEHYDR_CYS"/>
    <property type="match status" value="1"/>
</dbReference>
<dbReference type="PROSITE" id="PS00687">
    <property type="entry name" value="ALDEHYDE_DEHYDR_GLU"/>
    <property type="match status" value="1"/>
</dbReference>
<organism>
    <name type="scientific">Escherichia coli O17:K52:H18 (strain UMN026 / ExPEC)</name>
    <dbReference type="NCBI Taxonomy" id="585056"/>
    <lineage>
        <taxon>Bacteria</taxon>
        <taxon>Pseudomonadati</taxon>
        <taxon>Pseudomonadota</taxon>
        <taxon>Gammaproteobacteria</taxon>
        <taxon>Enterobacterales</taxon>
        <taxon>Enterobacteriaceae</taxon>
        <taxon>Escherichia</taxon>
    </lineage>
</organism>
<comment type="function">
    <text evidence="1">Catalyzes the NAD-dependent reduction of succinylglutamate semialdehyde into succinylglutamate.</text>
</comment>
<comment type="catalytic activity">
    <reaction evidence="1">
        <text>N-succinyl-L-glutamate 5-semialdehyde + NAD(+) + H2O = N-succinyl-L-glutamate + NADH + 2 H(+)</text>
        <dbReference type="Rhea" id="RHEA:10812"/>
        <dbReference type="ChEBI" id="CHEBI:15377"/>
        <dbReference type="ChEBI" id="CHEBI:15378"/>
        <dbReference type="ChEBI" id="CHEBI:57540"/>
        <dbReference type="ChEBI" id="CHEBI:57945"/>
        <dbReference type="ChEBI" id="CHEBI:58520"/>
        <dbReference type="ChEBI" id="CHEBI:58763"/>
        <dbReference type="EC" id="1.2.1.71"/>
    </reaction>
</comment>
<comment type="pathway">
    <text evidence="1">Amino-acid degradation; L-arginine degradation via AST pathway; L-glutamate and succinate from L-arginine: step 4/5.</text>
</comment>
<comment type="similarity">
    <text evidence="1">Belongs to the aldehyde dehydrogenase family. AstD subfamily.</text>
</comment>
<keyword id="KW-0056">Arginine metabolism</keyword>
<keyword id="KW-0520">NAD</keyword>
<keyword id="KW-0560">Oxidoreductase</keyword>
<name>ASTD_ECOLU</name>
<gene>
    <name evidence="1" type="primary">astD</name>
    <name type="ordered locus">ECUMN_2035</name>
</gene>
<accession>B7N582</accession>